<keyword id="KW-0143">Chaperone</keyword>
<keyword id="KW-0963">Cytoplasm</keyword>
<keyword id="KW-0235">DNA replication</keyword>
<keyword id="KW-0479">Metal-binding</keyword>
<keyword id="KW-0677">Repeat</keyword>
<keyword id="KW-0346">Stress response</keyword>
<keyword id="KW-0862">Zinc</keyword>
<keyword id="KW-0863">Zinc-finger</keyword>
<proteinExistence type="inferred from homology"/>
<reference key="1">
    <citation type="submission" date="2006-12" db="EMBL/GenBank/DDBJ databases">
        <title>Complete sequence of Acidovorax avenae subsp. citrulli AAC00-1.</title>
        <authorList>
            <person name="Copeland A."/>
            <person name="Lucas S."/>
            <person name="Lapidus A."/>
            <person name="Barry K."/>
            <person name="Detter J.C."/>
            <person name="Glavina del Rio T."/>
            <person name="Dalin E."/>
            <person name="Tice H."/>
            <person name="Pitluck S."/>
            <person name="Kiss H."/>
            <person name="Brettin T."/>
            <person name="Bruce D."/>
            <person name="Han C."/>
            <person name="Tapia R."/>
            <person name="Gilna P."/>
            <person name="Schmutz J."/>
            <person name="Larimer F."/>
            <person name="Land M."/>
            <person name="Hauser L."/>
            <person name="Kyrpides N."/>
            <person name="Kim E."/>
            <person name="Stahl D."/>
            <person name="Richardson P."/>
        </authorList>
    </citation>
    <scope>NUCLEOTIDE SEQUENCE [LARGE SCALE GENOMIC DNA]</scope>
    <source>
        <strain>AAC00-1</strain>
    </source>
</reference>
<protein>
    <recommendedName>
        <fullName evidence="1">Chaperone protein DnaJ</fullName>
    </recommendedName>
</protein>
<sequence length="378" mass="40923">MSKRDFYEVLGVPKNASDEEIKKAYRKLAMKHHPDRNQGDAAKPAEEKFKEAKEAYEMLSDPQKRAAYDQFGHAGVDPNMRGPGGAGAEGFGGFAEAFGDIFGDMFGGRRGAGGGRQVYRGNDLSYAMDITLEEAAKGKEAQIRIPSWENCETCHGSGAKPGTSAKTCTTCSGTGTVQMRQGFFSVQQTCPHCRGTGKIIPEPCVTCHGQGKVKKQKTLEVKIPAGIDDGMRIRSVGNGEPGTNGGPPGDLYIEIRLKKHEIFERDGDDLHCQVPVSFITAALGGEIEVPTLQGKAAIDIPEGTQAGKQFRLRGKGIKGVRASYPGDLYCHIVVETPVKLTEHQRKLLRELDDSLKKGGGKHSPSGESWTDRLKNLFT</sequence>
<dbReference type="EMBL" id="CP000512">
    <property type="protein sequence ID" value="ABM31816.1"/>
    <property type="molecule type" value="Genomic_DNA"/>
</dbReference>
<dbReference type="RefSeq" id="WP_011794368.1">
    <property type="nucleotide sequence ID" value="NC_008752.1"/>
</dbReference>
<dbReference type="SMR" id="A1TLH8"/>
<dbReference type="STRING" id="397945.Aave_1225"/>
<dbReference type="GeneID" id="79790886"/>
<dbReference type="KEGG" id="aav:Aave_1225"/>
<dbReference type="eggNOG" id="COG0484">
    <property type="taxonomic scope" value="Bacteria"/>
</dbReference>
<dbReference type="HOGENOM" id="CLU_017633_0_7_4"/>
<dbReference type="OrthoDB" id="9779889at2"/>
<dbReference type="Proteomes" id="UP000002596">
    <property type="component" value="Chromosome"/>
</dbReference>
<dbReference type="GO" id="GO:0005737">
    <property type="term" value="C:cytoplasm"/>
    <property type="evidence" value="ECO:0007669"/>
    <property type="project" value="UniProtKB-SubCell"/>
</dbReference>
<dbReference type="GO" id="GO:0005524">
    <property type="term" value="F:ATP binding"/>
    <property type="evidence" value="ECO:0007669"/>
    <property type="project" value="InterPro"/>
</dbReference>
<dbReference type="GO" id="GO:0031072">
    <property type="term" value="F:heat shock protein binding"/>
    <property type="evidence" value="ECO:0007669"/>
    <property type="project" value="InterPro"/>
</dbReference>
<dbReference type="GO" id="GO:0051082">
    <property type="term" value="F:unfolded protein binding"/>
    <property type="evidence" value="ECO:0007669"/>
    <property type="project" value="UniProtKB-UniRule"/>
</dbReference>
<dbReference type="GO" id="GO:0008270">
    <property type="term" value="F:zinc ion binding"/>
    <property type="evidence" value="ECO:0007669"/>
    <property type="project" value="UniProtKB-UniRule"/>
</dbReference>
<dbReference type="GO" id="GO:0051085">
    <property type="term" value="P:chaperone cofactor-dependent protein refolding"/>
    <property type="evidence" value="ECO:0007669"/>
    <property type="project" value="TreeGrafter"/>
</dbReference>
<dbReference type="GO" id="GO:0006260">
    <property type="term" value="P:DNA replication"/>
    <property type="evidence" value="ECO:0007669"/>
    <property type="project" value="UniProtKB-KW"/>
</dbReference>
<dbReference type="GO" id="GO:0042026">
    <property type="term" value="P:protein refolding"/>
    <property type="evidence" value="ECO:0007669"/>
    <property type="project" value="TreeGrafter"/>
</dbReference>
<dbReference type="GO" id="GO:0009408">
    <property type="term" value="P:response to heat"/>
    <property type="evidence" value="ECO:0007669"/>
    <property type="project" value="InterPro"/>
</dbReference>
<dbReference type="CDD" id="cd06257">
    <property type="entry name" value="DnaJ"/>
    <property type="match status" value="1"/>
</dbReference>
<dbReference type="CDD" id="cd10747">
    <property type="entry name" value="DnaJ_C"/>
    <property type="match status" value="1"/>
</dbReference>
<dbReference type="CDD" id="cd10719">
    <property type="entry name" value="DnaJ_zf"/>
    <property type="match status" value="1"/>
</dbReference>
<dbReference type="FunFam" id="1.10.287.110:FF:000034">
    <property type="entry name" value="Chaperone protein DnaJ"/>
    <property type="match status" value="1"/>
</dbReference>
<dbReference type="FunFam" id="2.10.230.10:FF:000002">
    <property type="entry name" value="Molecular chaperone DnaJ"/>
    <property type="match status" value="1"/>
</dbReference>
<dbReference type="FunFam" id="2.60.260.20:FF:000004">
    <property type="entry name" value="Molecular chaperone DnaJ"/>
    <property type="match status" value="1"/>
</dbReference>
<dbReference type="Gene3D" id="1.10.287.110">
    <property type="entry name" value="DnaJ domain"/>
    <property type="match status" value="1"/>
</dbReference>
<dbReference type="Gene3D" id="2.10.230.10">
    <property type="entry name" value="Heat shock protein DnaJ, cysteine-rich domain"/>
    <property type="match status" value="1"/>
</dbReference>
<dbReference type="Gene3D" id="2.60.260.20">
    <property type="entry name" value="Urease metallochaperone UreE, N-terminal domain"/>
    <property type="match status" value="2"/>
</dbReference>
<dbReference type="HAMAP" id="MF_01152">
    <property type="entry name" value="DnaJ"/>
    <property type="match status" value="1"/>
</dbReference>
<dbReference type="InterPro" id="IPR012724">
    <property type="entry name" value="DnaJ"/>
</dbReference>
<dbReference type="InterPro" id="IPR002939">
    <property type="entry name" value="DnaJ_C"/>
</dbReference>
<dbReference type="InterPro" id="IPR001623">
    <property type="entry name" value="DnaJ_domain"/>
</dbReference>
<dbReference type="InterPro" id="IPR018253">
    <property type="entry name" value="DnaJ_domain_CS"/>
</dbReference>
<dbReference type="InterPro" id="IPR008971">
    <property type="entry name" value="HSP40/DnaJ_pept-bd"/>
</dbReference>
<dbReference type="InterPro" id="IPR001305">
    <property type="entry name" value="HSP_DnaJ_Cys-rich_dom"/>
</dbReference>
<dbReference type="InterPro" id="IPR036410">
    <property type="entry name" value="HSP_DnaJ_Cys-rich_dom_sf"/>
</dbReference>
<dbReference type="InterPro" id="IPR036869">
    <property type="entry name" value="J_dom_sf"/>
</dbReference>
<dbReference type="NCBIfam" id="TIGR02349">
    <property type="entry name" value="DnaJ_bact"/>
    <property type="match status" value="1"/>
</dbReference>
<dbReference type="NCBIfam" id="NF008035">
    <property type="entry name" value="PRK10767.1"/>
    <property type="match status" value="1"/>
</dbReference>
<dbReference type="PANTHER" id="PTHR43096:SF48">
    <property type="entry name" value="CHAPERONE PROTEIN DNAJ"/>
    <property type="match status" value="1"/>
</dbReference>
<dbReference type="PANTHER" id="PTHR43096">
    <property type="entry name" value="DNAJ HOMOLOG 1, MITOCHONDRIAL-RELATED"/>
    <property type="match status" value="1"/>
</dbReference>
<dbReference type="Pfam" id="PF00226">
    <property type="entry name" value="DnaJ"/>
    <property type="match status" value="1"/>
</dbReference>
<dbReference type="Pfam" id="PF01556">
    <property type="entry name" value="DnaJ_C"/>
    <property type="match status" value="1"/>
</dbReference>
<dbReference type="Pfam" id="PF00684">
    <property type="entry name" value="DnaJ_CXXCXGXG"/>
    <property type="match status" value="1"/>
</dbReference>
<dbReference type="PRINTS" id="PR00625">
    <property type="entry name" value="JDOMAIN"/>
</dbReference>
<dbReference type="SMART" id="SM00271">
    <property type="entry name" value="DnaJ"/>
    <property type="match status" value="1"/>
</dbReference>
<dbReference type="SUPFAM" id="SSF46565">
    <property type="entry name" value="Chaperone J-domain"/>
    <property type="match status" value="1"/>
</dbReference>
<dbReference type="SUPFAM" id="SSF57938">
    <property type="entry name" value="DnaJ/Hsp40 cysteine-rich domain"/>
    <property type="match status" value="1"/>
</dbReference>
<dbReference type="SUPFAM" id="SSF49493">
    <property type="entry name" value="HSP40/DnaJ peptide-binding domain"/>
    <property type="match status" value="2"/>
</dbReference>
<dbReference type="PROSITE" id="PS00636">
    <property type="entry name" value="DNAJ_1"/>
    <property type="match status" value="1"/>
</dbReference>
<dbReference type="PROSITE" id="PS50076">
    <property type="entry name" value="DNAJ_2"/>
    <property type="match status" value="1"/>
</dbReference>
<dbReference type="PROSITE" id="PS51188">
    <property type="entry name" value="ZF_CR"/>
    <property type="match status" value="1"/>
</dbReference>
<gene>
    <name evidence="1" type="primary">dnaJ</name>
    <name type="ordered locus">Aave_1225</name>
</gene>
<organism>
    <name type="scientific">Paracidovorax citrulli (strain AAC00-1)</name>
    <name type="common">Acidovorax citrulli</name>
    <dbReference type="NCBI Taxonomy" id="397945"/>
    <lineage>
        <taxon>Bacteria</taxon>
        <taxon>Pseudomonadati</taxon>
        <taxon>Pseudomonadota</taxon>
        <taxon>Betaproteobacteria</taxon>
        <taxon>Burkholderiales</taxon>
        <taxon>Comamonadaceae</taxon>
        <taxon>Paracidovorax</taxon>
    </lineage>
</organism>
<feature type="chain" id="PRO_1000085132" description="Chaperone protein DnaJ">
    <location>
        <begin position="1"/>
        <end position="378"/>
    </location>
</feature>
<feature type="domain" description="J" evidence="1">
    <location>
        <begin position="5"/>
        <end position="72"/>
    </location>
</feature>
<feature type="repeat" description="CXXCXGXG motif">
    <location>
        <begin position="151"/>
        <end position="158"/>
    </location>
</feature>
<feature type="repeat" description="CXXCXGXG motif">
    <location>
        <begin position="168"/>
        <end position="175"/>
    </location>
</feature>
<feature type="repeat" description="CXXCXGXG motif">
    <location>
        <begin position="190"/>
        <end position="197"/>
    </location>
</feature>
<feature type="repeat" description="CXXCXGXG motif">
    <location>
        <begin position="204"/>
        <end position="211"/>
    </location>
</feature>
<feature type="zinc finger region" description="CR-type" evidence="1">
    <location>
        <begin position="138"/>
        <end position="216"/>
    </location>
</feature>
<feature type="region of interest" description="Disordered" evidence="2">
    <location>
        <begin position="354"/>
        <end position="378"/>
    </location>
</feature>
<feature type="compositionally biased region" description="Basic and acidic residues" evidence="2">
    <location>
        <begin position="369"/>
        <end position="378"/>
    </location>
</feature>
<feature type="binding site" evidence="1">
    <location>
        <position position="151"/>
    </location>
    <ligand>
        <name>Zn(2+)</name>
        <dbReference type="ChEBI" id="CHEBI:29105"/>
        <label>1</label>
    </ligand>
</feature>
<feature type="binding site" evidence="1">
    <location>
        <position position="154"/>
    </location>
    <ligand>
        <name>Zn(2+)</name>
        <dbReference type="ChEBI" id="CHEBI:29105"/>
        <label>1</label>
    </ligand>
</feature>
<feature type="binding site" evidence="1">
    <location>
        <position position="168"/>
    </location>
    <ligand>
        <name>Zn(2+)</name>
        <dbReference type="ChEBI" id="CHEBI:29105"/>
        <label>2</label>
    </ligand>
</feature>
<feature type="binding site" evidence="1">
    <location>
        <position position="171"/>
    </location>
    <ligand>
        <name>Zn(2+)</name>
        <dbReference type="ChEBI" id="CHEBI:29105"/>
        <label>2</label>
    </ligand>
</feature>
<feature type="binding site" evidence="1">
    <location>
        <position position="190"/>
    </location>
    <ligand>
        <name>Zn(2+)</name>
        <dbReference type="ChEBI" id="CHEBI:29105"/>
        <label>2</label>
    </ligand>
</feature>
<feature type="binding site" evidence="1">
    <location>
        <position position="193"/>
    </location>
    <ligand>
        <name>Zn(2+)</name>
        <dbReference type="ChEBI" id="CHEBI:29105"/>
        <label>2</label>
    </ligand>
</feature>
<feature type="binding site" evidence="1">
    <location>
        <position position="204"/>
    </location>
    <ligand>
        <name>Zn(2+)</name>
        <dbReference type="ChEBI" id="CHEBI:29105"/>
        <label>1</label>
    </ligand>
</feature>
<feature type="binding site" evidence="1">
    <location>
        <position position="207"/>
    </location>
    <ligand>
        <name>Zn(2+)</name>
        <dbReference type="ChEBI" id="CHEBI:29105"/>
        <label>1</label>
    </ligand>
</feature>
<name>DNAJ_PARC0</name>
<comment type="function">
    <text evidence="1">Participates actively in the response to hyperosmotic and heat shock by preventing the aggregation of stress-denatured proteins and by disaggregating proteins, also in an autonomous, DnaK-independent fashion. Unfolded proteins bind initially to DnaJ; upon interaction with the DnaJ-bound protein, DnaK hydrolyzes its bound ATP, resulting in the formation of a stable complex. GrpE releases ADP from DnaK; ATP binding to DnaK triggers the release of the substrate protein, thus completing the reaction cycle. Several rounds of ATP-dependent interactions between DnaJ, DnaK and GrpE are required for fully efficient folding. Also involved, together with DnaK and GrpE, in the DNA replication of plasmids through activation of initiation proteins.</text>
</comment>
<comment type="cofactor">
    <cofactor evidence="1">
        <name>Zn(2+)</name>
        <dbReference type="ChEBI" id="CHEBI:29105"/>
    </cofactor>
    <text evidence="1">Binds 2 Zn(2+) ions per monomer.</text>
</comment>
<comment type="subunit">
    <text evidence="1">Homodimer.</text>
</comment>
<comment type="subcellular location">
    <subcellularLocation>
        <location evidence="1">Cytoplasm</location>
    </subcellularLocation>
</comment>
<comment type="domain">
    <text evidence="1">The J domain is necessary and sufficient to stimulate DnaK ATPase activity. Zinc center 1 plays an important role in the autonomous, DnaK-independent chaperone activity of DnaJ. Zinc center 2 is essential for interaction with DnaK and for DnaJ activity.</text>
</comment>
<comment type="similarity">
    <text evidence="1">Belongs to the DnaJ family.</text>
</comment>
<accession>A1TLH8</accession>
<evidence type="ECO:0000255" key="1">
    <source>
        <dbReference type="HAMAP-Rule" id="MF_01152"/>
    </source>
</evidence>
<evidence type="ECO:0000256" key="2">
    <source>
        <dbReference type="SAM" id="MobiDB-lite"/>
    </source>
</evidence>